<reference key="1">
    <citation type="journal article" date="1997" name="Nature">
        <title>The nucleotide sequence of Saccharomyces cerevisiae chromosome XV.</title>
        <authorList>
            <person name="Dujon B."/>
            <person name="Albermann K."/>
            <person name="Aldea M."/>
            <person name="Alexandraki D."/>
            <person name="Ansorge W."/>
            <person name="Arino J."/>
            <person name="Benes V."/>
            <person name="Bohn C."/>
            <person name="Bolotin-Fukuhara M."/>
            <person name="Bordonne R."/>
            <person name="Boyer J."/>
            <person name="Camasses A."/>
            <person name="Casamayor A."/>
            <person name="Casas C."/>
            <person name="Cheret G."/>
            <person name="Cziepluch C."/>
            <person name="Daignan-Fornier B."/>
            <person name="Dang V.-D."/>
            <person name="de Haan M."/>
            <person name="Delius H."/>
            <person name="Durand P."/>
            <person name="Fairhead C."/>
            <person name="Feldmann H."/>
            <person name="Gaillon L."/>
            <person name="Galisson F."/>
            <person name="Gamo F.-J."/>
            <person name="Gancedo C."/>
            <person name="Goffeau A."/>
            <person name="Goulding S.E."/>
            <person name="Grivell L.A."/>
            <person name="Habbig B."/>
            <person name="Hand N.J."/>
            <person name="Hani J."/>
            <person name="Hattenhorst U."/>
            <person name="Hebling U."/>
            <person name="Hernando Y."/>
            <person name="Herrero E."/>
            <person name="Heumann K."/>
            <person name="Hiesel R."/>
            <person name="Hilger F."/>
            <person name="Hofmann B."/>
            <person name="Hollenberg C.P."/>
            <person name="Hughes B."/>
            <person name="Jauniaux J.-C."/>
            <person name="Kalogeropoulos A."/>
            <person name="Katsoulou C."/>
            <person name="Kordes E."/>
            <person name="Lafuente M.J."/>
            <person name="Landt O."/>
            <person name="Louis E.J."/>
            <person name="Maarse A.C."/>
            <person name="Madania A."/>
            <person name="Mannhaupt G."/>
            <person name="Marck C."/>
            <person name="Martin R.P."/>
            <person name="Mewes H.-W."/>
            <person name="Michaux G."/>
            <person name="Paces V."/>
            <person name="Parle-McDermott A.G."/>
            <person name="Pearson B.M."/>
            <person name="Perrin A."/>
            <person name="Pettersson B."/>
            <person name="Poch O."/>
            <person name="Pohl T.M."/>
            <person name="Poirey R."/>
            <person name="Portetelle D."/>
            <person name="Pujol A."/>
            <person name="Purnelle B."/>
            <person name="Ramezani Rad M."/>
            <person name="Rechmann S."/>
            <person name="Schwager C."/>
            <person name="Schweizer M."/>
            <person name="Sor F."/>
            <person name="Sterky F."/>
            <person name="Tarassov I.A."/>
            <person name="Teodoru C."/>
            <person name="Tettelin H."/>
            <person name="Thierry A."/>
            <person name="Tobiasch E."/>
            <person name="Tzermia M."/>
            <person name="Uhlen M."/>
            <person name="Unseld M."/>
            <person name="Valens M."/>
            <person name="Vandenbol M."/>
            <person name="Vetter I."/>
            <person name="Vlcek C."/>
            <person name="Voet M."/>
            <person name="Volckaert G."/>
            <person name="Voss H."/>
            <person name="Wambutt R."/>
            <person name="Wedler H."/>
            <person name="Wiemann S."/>
            <person name="Winsor B."/>
            <person name="Wolfe K.H."/>
            <person name="Zollner A."/>
            <person name="Zumstein E."/>
            <person name="Kleine K."/>
        </authorList>
    </citation>
    <scope>NUCLEOTIDE SEQUENCE [LARGE SCALE GENOMIC DNA]</scope>
    <source>
        <strain>ATCC 204508 / S288c</strain>
    </source>
</reference>
<reference key="2">
    <citation type="journal article" date="2014" name="G3 (Bethesda)">
        <title>The reference genome sequence of Saccharomyces cerevisiae: Then and now.</title>
        <authorList>
            <person name="Engel S.R."/>
            <person name="Dietrich F.S."/>
            <person name="Fisk D.G."/>
            <person name="Binkley G."/>
            <person name="Balakrishnan R."/>
            <person name="Costanzo M.C."/>
            <person name="Dwight S.S."/>
            <person name="Hitz B.C."/>
            <person name="Karra K."/>
            <person name="Nash R.S."/>
            <person name="Weng S."/>
            <person name="Wong E.D."/>
            <person name="Lloyd P."/>
            <person name="Skrzypek M.S."/>
            <person name="Miyasato S.R."/>
            <person name="Simison M."/>
            <person name="Cherry J.M."/>
        </authorList>
    </citation>
    <scope>GENOME REANNOTATION</scope>
    <source>
        <strain>ATCC 204508 / S288c</strain>
    </source>
</reference>
<reference key="3">
    <citation type="journal article" date="2002" name="J. Bacteriol.">
        <title>Synthesis of triacylglycerols by the acyl-coenzyme A:diacyl-glycerol acyltransferase Dga1p in lipid particles of the yeast Saccharomyces cerevisiae.</title>
        <authorList>
            <person name="Sorger D."/>
            <person name="Daum G."/>
        </authorList>
    </citation>
    <scope>FUNCTION</scope>
    <scope>SUBCELLULAR LOCATION</scope>
</reference>
<reference key="4">
    <citation type="journal article" date="2002" name="J. Biol. Chem.">
        <title>Storage lipid synthesis is non-essential in yeast.</title>
        <authorList>
            <person name="Sandager L."/>
            <person name="Gustavsson M.H."/>
            <person name="Staahl U."/>
            <person name="Dahlqvist A."/>
            <person name="Wiberg E."/>
            <person name="Banas A."/>
            <person name="Lenman M."/>
            <person name="Ronne H."/>
            <person name="Stymne S."/>
        </authorList>
    </citation>
    <scope>FUNCTION</scope>
</reference>
<reference key="5">
    <citation type="journal article" date="2002" name="J. Biol. Chem.">
        <title>The DGA1 gene determines a second triglyceride synthetic pathway in yeast.</title>
        <authorList>
            <person name="Oelkers P."/>
            <person name="Cromley D."/>
            <person name="Padamsee M."/>
            <person name="Billheimer J.T."/>
            <person name="Sturley S.L."/>
        </authorList>
    </citation>
    <scope>FUNCTION</scope>
</reference>
<reference key="6">
    <citation type="journal article" date="2003" name="Nature">
        <title>Global analysis of protein localization in budding yeast.</title>
        <authorList>
            <person name="Huh W.-K."/>
            <person name="Falvo J.V."/>
            <person name="Gerke L.C."/>
            <person name="Carroll A.S."/>
            <person name="Howson R.W."/>
            <person name="Weissman J.S."/>
            <person name="O'Shea E.K."/>
        </authorList>
    </citation>
    <scope>SUBCELLULAR LOCATION [LARGE SCALE ANALYSIS]</scope>
</reference>
<reference key="7">
    <citation type="journal article" date="2003" name="Nature">
        <title>Global analysis of protein expression in yeast.</title>
        <authorList>
            <person name="Ghaemmaghami S."/>
            <person name="Huh W.-K."/>
            <person name="Bower K."/>
            <person name="Howson R.W."/>
            <person name="Belle A."/>
            <person name="Dephoure N."/>
            <person name="O'Shea E.K."/>
            <person name="Weissman J.S."/>
        </authorList>
    </citation>
    <scope>LEVEL OF PROTEIN EXPRESSION [LARGE SCALE ANALYSIS]</scope>
</reference>
<reference key="8">
    <citation type="journal article" date="2004" name="Biochem. J.">
        <title>Lipid dynamics in yeast under haem-induced unsaturated fatty acid and/or sterol depletion.</title>
        <authorList>
            <person name="Ferreira T."/>
            <person name="Regnacq M."/>
            <person name="Alimardani P."/>
            <person name="Moreau-Vauzelle C."/>
            <person name="Berges T."/>
        </authorList>
    </citation>
    <scope>FUNCTION</scope>
</reference>
<reference key="9">
    <citation type="journal article" date="2004" name="J. Biol. Chem.">
        <title>A yeast strain lacking lipid particles bears a defect in ergosterol formation.</title>
        <authorList>
            <person name="Sorger D."/>
            <person name="Athenstaedt K."/>
            <person name="Hrastnik C."/>
            <person name="Daum G."/>
        </authorList>
    </citation>
    <scope>FUNCTION</scope>
</reference>
<reference key="10">
    <citation type="journal article" date="2007" name="J. Proteome Res.">
        <title>Large-scale phosphorylation analysis of alpha-factor-arrested Saccharomyces cerevisiae.</title>
        <authorList>
            <person name="Li X."/>
            <person name="Gerber S.A."/>
            <person name="Rudner A.D."/>
            <person name="Beausoleil S.A."/>
            <person name="Haas W."/>
            <person name="Villen J."/>
            <person name="Elias J.E."/>
            <person name="Gygi S.P."/>
        </authorList>
    </citation>
    <scope>PHOSPHORYLATION [LARGE SCALE ANALYSIS] AT SER-17</scope>
    <scope>IDENTIFICATION BY MASS SPECTROMETRY [LARGE SCALE ANALYSIS]</scope>
    <source>
        <strain>ADR376</strain>
    </source>
</reference>
<reference key="11">
    <citation type="journal article" date="2010" name="Biochemistry">
        <title>Role of cysteine residues in thiol modification of acyl-CoA:diacylglycerol acyltransferase 2 from yeast.</title>
        <authorList>
            <person name="Liu Q."/>
            <person name="Siloto R.M."/>
            <person name="Weselake R.J."/>
        </authorList>
    </citation>
    <scope>CATALYTIC ACTIVITY</scope>
    <scope>SUBCELLULAR LOCATION</scope>
</reference>
<reference key="12">
    <citation type="journal article" date="2010" name="Biochim. Biophys. Acta">
        <title>Identification of Yju3p as functional orthologue of mammalian monoglyceride lipase in the yeast Saccharomyces cerevisiae.</title>
        <authorList>
            <person name="Heier C."/>
            <person name="Taschler U."/>
            <person name="Rengachari S."/>
            <person name="Oberer M."/>
            <person name="Wolinski H."/>
            <person name="Natter K."/>
            <person name="Kohlwein S.D."/>
            <person name="Leber R."/>
            <person name="Zimmermann R."/>
        </authorList>
    </citation>
    <scope>FUNCTION</scope>
    <scope>CATALYTIC ACTIVITY</scope>
</reference>
<reference key="13">
    <citation type="journal article" date="2011" name="Biochim. Biophys. Acta">
        <title>Lipid particles/droplets of the yeast Saccharomyces cerevisiae revisited: lipidome meets proteome.</title>
        <authorList>
            <person name="Grillitsch K."/>
            <person name="Connerth M."/>
            <person name="Kofeler H."/>
            <person name="Arrey T.N."/>
            <person name="Rietschel B."/>
            <person name="Wagner B."/>
            <person name="Karas M."/>
            <person name="Daum G."/>
        </authorList>
    </citation>
    <scope>SUBCELLULAR LOCATION</scope>
</reference>
<reference key="14">
    <citation type="journal article" date="2011" name="J. Biol. Chem.">
        <title>Functional and topological analysis of yeast acyl-CoA:diacylglycerol acyltransferase 2, an endoplasmic reticulum enzyme essential for triacylglycerol biosynthesis.</title>
        <authorList>
            <person name="Liu Q."/>
            <person name="Siloto R.M."/>
            <person name="Snyder C.L."/>
            <person name="Weselake R.J."/>
        </authorList>
    </citation>
    <scope>FUNCTION</scope>
    <scope>TOPOLOGY</scope>
    <scope>MUTAGENESIS OF PHE-71; LEU-73; 129-TYR--PRO-131; HIS-193; 193-HIS--GLY-196 AND HIS-195</scope>
</reference>
<reference key="15">
    <citation type="journal article" date="2012" name="Biochem. J.">
        <title>A novel pathway of ceramide metabolism in Saccharomyces cerevisiae.</title>
        <authorList>
            <person name="Voynova N.S."/>
            <person name="Vionnet C."/>
            <person name="Ejsing C.S."/>
            <person name="Conzelmann A."/>
        </authorList>
    </citation>
    <scope>FUNCTION</scope>
</reference>
<reference key="16">
    <citation type="journal article" date="2014" name="J. Lipid Res.">
        <title>High-confidence proteomic analysis of yeast lipid droplets identifies additional droplet proteins and reveals connections to dolichol synthesis and sterol acetylation.</title>
        <authorList>
            <person name="Currie E."/>
            <person name="Guo X."/>
            <person name="Christiano R."/>
            <person name="Chitraju C."/>
            <person name="Kory N."/>
            <person name="Harrison K."/>
            <person name="Haas J."/>
            <person name="Walther T.C."/>
            <person name="Farese R.V. Jr."/>
        </authorList>
    </citation>
    <scope>SUBCELLULAR LOCATION</scope>
</reference>
<reference key="17">
    <citation type="journal article" date="2016" name="Curr. Microbiol.">
        <title>Energy storage in yeast: Regulation and competition with ethanol production.</title>
        <authorList>
            <person name="Jain S."/>
            <person name="Dholakia H."/>
            <person name="Kirtley W."/>
            <person name="Oelkers P."/>
        </authorList>
    </citation>
    <scope>CATALYTIC ACTIVITY</scope>
    <scope>BIOPHYSICOCHEMICAL PROPERTIES</scope>
</reference>
<reference key="18">
    <citation type="journal article" date="2020" name="J. Cell Biol.">
        <title>Seipin and Nem1 establish discrete ER subdomains to initiate yeast lipid droplet biogenesis.</title>
        <authorList>
            <person name="Choudhary V."/>
            <person name="El Atab O."/>
            <person name="Mizzon G."/>
            <person name="Prinz W.A."/>
            <person name="Schneiter R."/>
        </authorList>
    </citation>
    <scope>FUNCTION</scope>
    <scope>SUBCELLULAR LOCATION</scope>
</reference>
<gene>
    <name type="primary">DGA1</name>
    <name type="ordered locus">YOR245C</name>
</gene>
<organism>
    <name type="scientific">Saccharomyces cerevisiae (strain ATCC 204508 / S288c)</name>
    <name type="common">Baker's yeast</name>
    <dbReference type="NCBI Taxonomy" id="559292"/>
    <lineage>
        <taxon>Eukaryota</taxon>
        <taxon>Fungi</taxon>
        <taxon>Dikarya</taxon>
        <taxon>Ascomycota</taxon>
        <taxon>Saccharomycotina</taxon>
        <taxon>Saccharomycetes</taxon>
        <taxon>Saccharomycetales</taxon>
        <taxon>Saccharomycetaceae</taxon>
        <taxon>Saccharomyces</taxon>
    </lineage>
</organism>
<proteinExistence type="evidence at protein level"/>
<protein>
    <recommendedName>
        <fullName evidence="19">Diacylglycerol O-acyltransferase 1</fullName>
        <shortName>DGAT</shortName>
        <ecNumber evidence="11 12">2.3.1.20</ecNumber>
    </recommendedName>
    <alternativeName>
        <fullName>Acyl-CoA-dependent diacylglycerol O-acyltransferase</fullName>
    </alternativeName>
    <alternativeName>
        <fullName>Acyl-CoA:monoacylglycerol acyltransferase</fullName>
        <shortName>MGAT</shortName>
        <ecNumber evidence="12">2.3.1.22</ecNumber>
    </alternativeName>
    <alternativeName>
        <fullName>Triacylglycerol synthase</fullName>
        <shortName>TAG synthase</shortName>
    </alternativeName>
</protein>
<keyword id="KW-0012">Acyltransferase</keyword>
<keyword id="KW-0256">Endoplasmic reticulum</keyword>
<keyword id="KW-0319">Glycerol metabolism</keyword>
<keyword id="KW-0325">Glycoprotein</keyword>
<keyword id="KW-0444">Lipid biosynthesis</keyword>
<keyword id="KW-0551">Lipid droplet</keyword>
<keyword id="KW-0443">Lipid metabolism</keyword>
<keyword id="KW-0472">Membrane</keyword>
<keyword id="KW-0597">Phosphoprotein</keyword>
<keyword id="KW-1185">Reference proteome</keyword>
<keyword id="KW-0808">Transferase</keyword>
<keyword id="KW-0812">Transmembrane</keyword>
<keyword id="KW-1133">Transmembrane helix</keyword>
<comment type="function">
    <text evidence="4 5 6 9 10 12 13 15 18">Catalyzes the terminal and only committed step in triacylglycerol (TAG) synthesis by using diacylglycerol (DAG) and fatty acyl-CoA as substrates. Required for storage lipid synthesis. Major DAG esterifying enzyme in stationary phase when TAG production is particularly active. Involved in lipid particle synthesis from the endoplasmic reticulum, promoting localized TAG production at discrete ER subdomains, and in ergosterol biosynthesis (PubMed:11741946, PubMed:11751830, PubMed:11751875, PubMed:14640980, PubMed:15155725, PubMed:21321129, PubMed:32349126). Also has monoacylglycerol acyltransferase (MGAT) activity, catalyzing the acyl-CoA-dependent esterification of monoacylglycerol to diacylglycerol (PubMed:20554061). Can also utilize ceramide instead of DAG, acylating the ceramides by attaching a fatty acid to the hydroxy group on the first carbon atom of the long-chain base to produce 1-O-acylceramides (PubMed:22738231).</text>
</comment>
<comment type="catalytic activity">
    <reaction evidence="11 12">
        <text>an acyl-CoA + a 1,2-diacyl-sn-glycerol = a triacyl-sn-glycerol + CoA</text>
        <dbReference type="Rhea" id="RHEA:10868"/>
        <dbReference type="ChEBI" id="CHEBI:17815"/>
        <dbReference type="ChEBI" id="CHEBI:57287"/>
        <dbReference type="ChEBI" id="CHEBI:58342"/>
        <dbReference type="ChEBI" id="CHEBI:64615"/>
        <dbReference type="EC" id="2.3.1.20"/>
    </reaction>
</comment>
<comment type="catalytic activity">
    <reaction evidence="12">
        <text>a 2-acylglycerol + an acyl-CoA = a 1,2-diacylglycerol + CoA</text>
        <dbReference type="Rhea" id="RHEA:16741"/>
        <dbReference type="ChEBI" id="CHEBI:17389"/>
        <dbReference type="ChEBI" id="CHEBI:49172"/>
        <dbReference type="ChEBI" id="CHEBI:57287"/>
        <dbReference type="ChEBI" id="CHEBI:58342"/>
        <dbReference type="EC" id="2.3.1.22"/>
    </reaction>
</comment>
<comment type="catalytic activity">
    <reaction evidence="12 17">
        <text>2-(9Z-octadecenoyl)-glycerol + (9Z)-octadecenoyl-CoA = 1,2-di-(9Z-octadecenoyl)-glycerol + CoA</text>
        <dbReference type="Rhea" id="RHEA:39951"/>
        <dbReference type="ChEBI" id="CHEBI:52323"/>
        <dbReference type="ChEBI" id="CHEBI:57287"/>
        <dbReference type="ChEBI" id="CHEBI:57387"/>
        <dbReference type="ChEBI" id="CHEBI:73990"/>
    </reaction>
    <physiologicalReaction direction="left-to-right" evidence="20">
        <dbReference type="Rhea" id="RHEA:39952"/>
    </physiologicalReaction>
</comment>
<comment type="biophysicochemical properties">
    <kinetics>
        <KM evidence="17">17 uM for (9Z)-octadecenoyl-CoA</KM>
        <Vmax evidence="17">5.8 nmol/min/mg enzyme with (9Z)-octadecenoyl-CoA as substrate</Vmax>
    </kinetics>
</comment>
<comment type="pathway">
    <text evidence="19">Glycerolipid metabolism; triacylglycerol biosynthesis.</text>
</comment>
<comment type="subcellular location">
    <subcellularLocation>
        <location evidence="7 14 16">Lipid droplet</location>
    </subcellularLocation>
    <subcellularLocation>
        <location evidence="7 11 13 18">Endoplasmic reticulum membrane</location>
        <topology evidence="1">Multi-pass membrane protein</topology>
    </subcellularLocation>
    <text evidence="18">Localizes to sites of lipid droplet biogenesis in the endoplasmic reticulum.</text>
</comment>
<comment type="miscellaneous">
    <text evidence="8">Present with 907 molecules/cell in log phase SD medium.</text>
</comment>
<comment type="similarity">
    <text evidence="19">Belongs to the diacylglycerol acyltransferase family.</text>
</comment>
<name>DGAT2_YEAST</name>
<sequence length="418" mass="47711">MSGTFNDIRRRKKEEGSPTAGITERHENKSLSSIDKREQTLKPQLESCCPLATPFERRLQTLAVAWHTSSFVLFSIFTLFAISTPALWVLAIPYMIYFFFDRSPATGEVVNRYSLRFRSLPIWKWYCDYFPISLIKTVNLKPTFTLSKNKRVNEKNYKIRLWPTKYSINLKSNSTIDYRNQECTGPTYLFGYHPHGIGALGAFGAFATEGCNYSKIFPGIPISLMTLVTQFHIPLYRDYLLALGISSVSRKNALRTLSKNQSICIVVGGARESLLSSTNGTQLILNKRKGFIKLAIQTGNINLVPVFAFGEVDCYNVLSTKKDSVLGKMQLWFKENFGFTIPIFYARGLFNYDFGLLPFRAPINVVVGRPIYVEKKITNPPDDVVNHFHDLYIAELKRLYYENREKYGVPDAELKIVG</sequence>
<feature type="chain" id="PRO_0000233001" description="Diacylglycerol O-acyltransferase 1">
    <location>
        <begin position="1"/>
        <end position="418"/>
    </location>
</feature>
<feature type="topological domain" description="Cytoplasmic" evidence="21">
    <location>
        <begin position="1"/>
        <end position="71"/>
    </location>
</feature>
<feature type="transmembrane region" description="Helical" evidence="1">
    <location>
        <begin position="72"/>
        <end position="92"/>
    </location>
</feature>
<feature type="topological domain" description="Lumenal" evidence="21">
    <location>
        <begin position="93"/>
        <end position="186"/>
    </location>
</feature>
<feature type="transmembrane region" description="Helical" evidence="1">
    <location>
        <begin position="187"/>
        <end position="207"/>
    </location>
</feature>
<feature type="topological domain" description="Cytoplasmic" evidence="21">
    <location>
        <begin position="208"/>
        <end position="215"/>
    </location>
</feature>
<feature type="transmembrane region" description="Helical" evidence="1">
    <location>
        <begin position="216"/>
        <end position="236"/>
    </location>
</feature>
<feature type="topological domain" description="Lumenal" evidence="21">
    <location>
        <begin position="237"/>
        <end position="289"/>
    </location>
</feature>
<feature type="transmembrane region" description="Helical" evidence="1">
    <location>
        <begin position="290"/>
        <end position="310"/>
    </location>
</feature>
<feature type="topological domain" description="Cytoplasmic" evidence="21">
    <location>
        <begin position="311"/>
        <end position="418"/>
    </location>
</feature>
<feature type="region of interest" description="Disordered" evidence="3">
    <location>
        <begin position="1"/>
        <end position="30"/>
    </location>
</feature>
<feature type="modified residue" description="Phosphoserine" evidence="22">
    <location>
        <position position="17"/>
    </location>
</feature>
<feature type="glycosylation site" description="N-linked (GlcNAc...) asparagine" evidence="2">
    <location>
        <position position="173"/>
    </location>
</feature>
<feature type="glycosylation site" description="N-linked (GlcNAc...) asparagine" evidence="2">
    <location>
        <position position="260"/>
    </location>
</feature>
<feature type="glycosylation site" description="N-linked (GlcNAc...) asparagine" evidence="2">
    <location>
        <position position="279"/>
    </location>
</feature>
<feature type="mutagenesis site" description="Retains more than 40% of the wild-type enzyme activity." evidence="13">
    <original>F</original>
    <variation>A</variation>
    <location>
        <position position="71"/>
    </location>
</feature>
<feature type="mutagenesis site" description="Retains more than 40% of the wild-type enzyme activity." evidence="13">
    <original>L</original>
    <variation>A</variation>
    <location>
        <position position="73"/>
    </location>
</feature>
<feature type="mutagenesis site" description="Almost complete loss of enzyme activity." evidence="13">
    <original>YFP</original>
    <variation>AA</variation>
    <location>
        <begin position="129"/>
        <end position="131"/>
    </location>
</feature>
<feature type="mutagenesis site" description="Complete loss of enzyme activity." evidence="13">
    <original>HPHG</original>
    <variation>EPHS</variation>
    <location>
        <begin position="193"/>
        <end position="196"/>
    </location>
</feature>
<feature type="mutagenesis site" description="Almost complete loss of enzyme activity." evidence="13">
    <original>H</original>
    <variation>A</variation>
    <location>
        <position position="193"/>
    </location>
</feature>
<feature type="mutagenesis site" description="Complete loss of enzyme activity." evidence="13">
    <original>H</original>
    <variation>A</variation>
    <location>
        <position position="195"/>
    </location>
</feature>
<accession>Q08650</accession>
<accession>D6W2U7</accession>
<evidence type="ECO:0000255" key="1"/>
<evidence type="ECO:0000255" key="2">
    <source>
        <dbReference type="PROSITE-ProRule" id="PRU00498"/>
    </source>
</evidence>
<evidence type="ECO:0000256" key="3">
    <source>
        <dbReference type="SAM" id="MobiDB-lite"/>
    </source>
</evidence>
<evidence type="ECO:0000269" key="4">
    <source>
    </source>
</evidence>
<evidence type="ECO:0000269" key="5">
    <source>
    </source>
</evidence>
<evidence type="ECO:0000269" key="6">
    <source>
    </source>
</evidence>
<evidence type="ECO:0000269" key="7">
    <source>
    </source>
</evidence>
<evidence type="ECO:0000269" key="8">
    <source>
    </source>
</evidence>
<evidence type="ECO:0000269" key="9">
    <source>
    </source>
</evidence>
<evidence type="ECO:0000269" key="10">
    <source>
    </source>
</evidence>
<evidence type="ECO:0000269" key="11">
    <source>
    </source>
</evidence>
<evidence type="ECO:0000269" key="12">
    <source>
    </source>
</evidence>
<evidence type="ECO:0000269" key="13">
    <source>
    </source>
</evidence>
<evidence type="ECO:0000269" key="14">
    <source>
    </source>
</evidence>
<evidence type="ECO:0000269" key="15">
    <source>
    </source>
</evidence>
<evidence type="ECO:0000269" key="16">
    <source>
    </source>
</evidence>
<evidence type="ECO:0000269" key="17">
    <source>
    </source>
</evidence>
<evidence type="ECO:0000269" key="18">
    <source>
    </source>
</evidence>
<evidence type="ECO:0000305" key="19"/>
<evidence type="ECO:0000305" key="20">
    <source>
    </source>
</evidence>
<evidence type="ECO:0000305" key="21">
    <source>
    </source>
</evidence>
<evidence type="ECO:0007744" key="22">
    <source>
    </source>
</evidence>
<dbReference type="EC" id="2.3.1.20" evidence="11 12"/>
<dbReference type="EC" id="2.3.1.22" evidence="12"/>
<dbReference type="EMBL" id="Z75153">
    <property type="protein sequence ID" value="CAA99466.1"/>
    <property type="molecule type" value="Genomic_DNA"/>
</dbReference>
<dbReference type="EMBL" id="BK006948">
    <property type="protein sequence ID" value="DAA11013.1"/>
    <property type="molecule type" value="Genomic_DNA"/>
</dbReference>
<dbReference type="PIR" id="S67138">
    <property type="entry name" value="S67138"/>
</dbReference>
<dbReference type="RefSeq" id="NP_014888.1">
    <property type="nucleotide sequence ID" value="NM_001183664.1"/>
</dbReference>
<dbReference type="BioGRID" id="34636">
    <property type="interactions" value="91"/>
</dbReference>
<dbReference type="DIP" id="DIP-2923N"/>
<dbReference type="FunCoup" id="Q08650">
    <property type="interactions" value="317"/>
</dbReference>
<dbReference type="IntAct" id="Q08650">
    <property type="interactions" value="2"/>
</dbReference>
<dbReference type="MINT" id="Q08650"/>
<dbReference type="STRING" id="4932.YOR245C"/>
<dbReference type="SwissLipids" id="SLP:000000051"/>
<dbReference type="GlyCosmos" id="Q08650">
    <property type="glycosylation" value="3 sites, No reported glycans"/>
</dbReference>
<dbReference type="GlyGen" id="Q08650">
    <property type="glycosylation" value="3 sites"/>
</dbReference>
<dbReference type="iPTMnet" id="Q08650"/>
<dbReference type="PaxDb" id="4932-YOR245C"/>
<dbReference type="PeptideAtlas" id="Q08650"/>
<dbReference type="EnsemblFungi" id="YOR245C_mRNA">
    <property type="protein sequence ID" value="YOR245C"/>
    <property type="gene ID" value="YOR245C"/>
</dbReference>
<dbReference type="GeneID" id="854419"/>
<dbReference type="KEGG" id="sce:YOR245C"/>
<dbReference type="AGR" id="SGD:S000005771"/>
<dbReference type="SGD" id="S000005771">
    <property type="gene designation" value="DGA1"/>
</dbReference>
<dbReference type="VEuPathDB" id="FungiDB:YOR245C"/>
<dbReference type="eggNOG" id="KOG0831">
    <property type="taxonomic scope" value="Eukaryota"/>
</dbReference>
<dbReference type="GeneTree" id="ENSGT01030000234582"/>
<dbReference type="HOGENOM" id="CLU_023995_4_1_1"/>
<dbReference type="InParanoid" id="Q08650"/>
<dbReference type="OMA" id="RSQWMRR"/>
<dbReference type="OrthoDB" id="264532at2759"/>
<dbReference type="BioCyc" id="MetaCyc:YOR245C-MONOMER"/>
<dbReference type="BioCyc" id="YEAST:YOR245C-MONOMER"/>
<dbReference type="BRENDA" id="2.3.1.20">
    <property type="organism ID" value="984"/>
</dbReference>
<dbReference type="Reactome" id="R-SCE-1482883">
    <property type="pathway name" value="Acyl chain remodeling of DAG and TAG"/>
</dbReference>
<dbReference type="Reactome" id="R-SCE-2142753">
    <property type="pathway name" value="Arachidonate metabolism"/>
</dbReference>
<dbReference type="Reactome" id="R-SCE-75109">
    <property type="pathway name" value="Triglyceride biosynthesis"/>
</dbReference>
<dbReference type="Reactome" id="R-SCE-9640463">
    <property type="pathway name" value="Wax biosynthesis"/>
</dbReference>
<dbReference type="UniPathway" id="UPA00282"/>
<dbReference type="BioGRID-ORCS" id="854419">
    <property type="hits" value="3 hits in 10 CRISPR screens"/>
</dbReference>
<dbReference type="PRO" id="PR:Q08650"/>
<dbReference type="Proteomes" id="UP000002311">
    <property type="component" value="Chromosome XV"/>
</dbReference>
<dbReference type="RNAct" id="Q08650">
    <property type="molecule type" value="protein"/>
</dbReference>
<dbReference type="GO" id="GO:0005783">
    <property type="term" value="C:endoplasmic reticulum"/>
    <property type="evidence" value="ECO:0007005"/>
    <property type="project" value="SGD"/>
</dbReference>
<dbReference type="GO" id="GO:0005789">
    <property type="term" value="C:endoplasmic reticulum membrane"/>
    <property type="evidence" value="ECO:0000318"/>
    <property type="project" value="GO_Central"/>
</dbReference>
<dbReference type="GO" id="GO:0005811">
    <property type="term" value="C:lipid droplet"/>
    <property type="evidence" value="ECO:0000314"/>
    <property type="project" value="SGD"/>
</dbReference>
<dbReference type="GO" id="GO:0016020">
    <property type="term" value="C:membrane"/>
    <property type="evidence" value="ECO:0000314"/>
    <property type="project" value="SGD"/>
</dbReference>
<dbReference type="GO" id="GO:0003846">
    <property type="term" value="F:2-acylglycerol O-acyltransferase activity"/>
    <property type="evidence" value="ECO:0007669"/>
    <property type="project" value="UniProtKB-EC"/>
</dbReference>
<dbReference type="GO" id="GO:0004144">
    <property type="term" value="F:diacylglycerol O-acyltransferase activity"/>
    <property type="evidence" value="ECO:0000314"/>
    <property type="project" value="SGD"/>
</dbReference>
<dbReference type="GO" id="GO:0006672">
    <property type="term" value="P:ceramide metabolic process"/>
    <property type="evidence" value="ECO:0000314"/>
    <property type="project" value="SGD"/>
</dbReference>
<dbReference type="GO" id="GO:0006071">
    <property type="term" value="P:glycerol metabolic process"/>
    <property type="evidence" value="ECO:0007669"/>
    <property type="project" value="UniProtKB-KW"/>
</dbReference>
<dbReference type="GO" id="GO:0035356">
    <property type="term" value="P:intracellular triglyceride homeostasis"/>
    <property type="evidence" value="ECO:0000315"/>
    <property type="project" value="SGD"/>
</dbReference>
<dbReference type="GO" id="GO:0019915">
    <property type="term" value="P:lipid storage"/>
    <property type="evidence" value="ECO:0000315"/>
    <property type="project" value="SGD"/>
</dbReference>
<dbReference type="GO" id="GO:0019432">
    <property type="term" value="P:triglyceride biosynthetic process"/>
    <property type="evidence" value="ECO:0000314"/>
    <property type="project" value="SGD"/>
</dbReference>
<dbReference type="CDD" id="cd07987">
    <property type="entry name" value="LPLAT_MGAT-like"/>
    <property type="match status" value="1"/>
</dbReference>
<dbReference type="InterPro" id="IPR007130">
    <property type="entry name" value="DAGAT"/>
</dbReference>
<dbReference type="PANTHER" id="PTHR12317:SF0">
    <property type="entry name" value="ACYLTRANSFERASE"/>
    <property type="match status" value="1"/>
</dbReference>
<dbReference type="PANTHER" id="PTHR12317">
    <property type="entry name" value="DIACYLGLYCEROL O-ACYLTRANSFERASE"/>
    <property type="match status" value="1"/>
</dbReference>
<dbReference type="Pfam" id="PF03982">
    <property type="entry name" value="DAGAT"/>
    <property type="match status" value="2"/>
</dbReference>